<feature type="initiator methionine" description="Removed" evidence="2">
    <location>
        <position position="1"/>
    </location>
</feature>
<feature type="chain" id="PRO_0000290197" description="Histone deacetylase complex subunit SAP18">
    <location>
        <begin position="2"/>
        <end position="153"/>
    </location>
</feature>
<feature type="region of interest" description="Disordered" evidence="3">
    <location>
        <begin position="1"/>
        <end position="20"/>
    </location>
</feature>
<feature type="region of interest" description="Involved in splicing regulation activity" evidence="1">
    <location>
        <begin position="93"/>
        <end position="153"/>
    </location>
</feature>
<feature type="compositionally biased region" description="Basic and acidic residues" evidence="3">
    <location>
        <begin position="7"/>
        <end position="20"/>
    </location>
</feature>
<feature type="modified residue" description="N-acetylalanine" evidence="2">
    <location>
        <position position="2"/>
    </location>
</feature>
<feature type="cross-link" description="Glycyl lysine isopeptide (Lys-Gly) (interchain with G-Cter in SUMO2)" evidence="2">
    <location>
        <position position="13"/>
    </location>
</feature>
<comment type="function">
    <text evidence="1">Component of the SIN3-repressing complex. Enhances the ability of SIN3-HDAC1-mediated transcriptional repression. When tethered to the promoter, it can direct the formation of a repressive complex to core histone proteins. Auxiliary component of the splicing-dependent multiprotein exon junction complex (EJC) deposited at splice junction on mRNAs. The EJC is a dynamic structure consisting of core proteins and several peripheral nuclear and cytoplasmic associated factors that join the complex only transiently either during EJC assembly or during subsequent mRNA metabolism. Component of the ASAP and PSAP complexes which bind RNA in a sequence-independent manner and are proposed to be recruited to the EJC prior to or during the splicing process and to regulate specific excision of introns in specific transcription subsets. The ASAP complex can inhibit mRNA processing during in vitro splicing reactions. The ASAP complex promotes apoptosis and is disassembled after induction of apoptosis. Involved in the splicing modulation of BCL2L1/Bcl-X (and probably other apoptotic genes); specifically inhibits the formation of proapoptotic isoforms such as Bcl-X(S); the activity is different from the established EJC assembly and function (By similarity).</text>
</comment>
<comment type="subunit">
    <text evidence="1">Found in a mRNA splicing-dependent exon junction complex (EJC). Component of the heterotrimeric ASAP (apoptosis- and splicing-associated protein) and PSAP complexes consisting of RNPS1, SAP18 and either ACIN1 or PNN, respectively; the ASAP and PSAP complexes probably are formed mutually exclusive. For the ASAP complex, the association of SAP18 seems to require a preformed RNPS1:ACIN1 complex. Forms a complex with SIN3A and HDAC1. Interacts with SUFU (By similarity).</text>
</comment>
<comment type="subcellular location">
    <subcellularLocation>
        <location evidence="2">Nucleus</location>
    </subcellularLocation>
    <subcellularLocation>
        <location evidence="2">Cytoplasm</location>
    </subcellularLocation>
    <subcellularLocation>
        <location evidence="2">Nucleus speckle</location>
    </subcellularLocation>
    <text evidence="2">Shuttles between the nucleus and the cytoplasm (By similarity). Colocalizes with ACIN1 and SRSF2 in nuclear speckles (By similarity).</text>
</comment>
<comment type="similarity">
    <text evidence="4">Belongs to the SAP18 family.</text>
</comment>
<dbReference type="EMBL" id="CR857814">
    <property type="protein sequence ID" value="CAH90072.1"/>
    <property type="molecule type" value="mRNA"/>
</dbReference>
<dbReference type="RefSeq" id="NP_001129009.1">
    <property type="nucleotide sequence ID" value="NM_001135537.1"/>
</dbReference>
<dbReference type="BMRB" id="Q5RDT5"/>
<dbReference type="SMR" id="Q5RDT5"/>
<dbReference type="FunCoup" id="Q5RDT5">
    <property type="interactions" value="3873"/>
</dbReference>
<dbReference type="STRING" id="9601.ENSPPYP00000005921"/>
<dbReference type="Ensembl" id="ENSPPYT00000006154.2">
    <property type="protein sequence ID" value="ENSPPYP00000005921.1"/>
    <property type="gene ID" value="ENSPPYG00000005198.3"/>
</dbReference>
<dbReference type="GeneID" id="100190849"/>
<dbReference type="KEGG" id="pon:100190849"/>
<dbReference type="CTD" id="10284"/>
<dbReference type="eggNOG" id="KOG3391">
    <property type="taxonomic scope" value="Eukaryota"/>
</dbReference>
<dbReference type="GeneTree" id="ENSGT00390000003152"/>
<dbReference type="HOGENOM" id="CLU_108681_0_1_1"/>
<dbReference type="InParanoid" id="Q5RDT5"/>
<dbReference type="OMA" id="TYRMREI"/>
<dbReference type="OrthoDB" id="440566at2759"/>
<dbReference type="TreeFam" id="TF313032"/>
<dbReference type="Proteomes" id="UP000001595">
    <property type="component" value="Chromosome 13"/>
</dbReference>
<dbReference type="GO" id="GO:0061574">
    <property type="term" value="C:ASAP complex"/>
    <property type="evidence" value="ECO:0000250"/>
    <property type="project" value="UniProtKB"/>
</dbReference>
<dbReference type="GO" id="GO:0005737">
    <property type="term" value="C:cytoplasm"/>
    <property type="evidence" value="ECO:0007669"/>
    <property type="project" value="UniProtKB-SubCell"/>
</dbReference>
<dbReference type="GO" id="GO:0016607">
    <property type="term" value="C:nuclear speck"/>
    <property type="evidence" value="ECO:0000250"/>
    <property type="project" value="UniProtKB"/>
</dbReference>
<dbReference type="GO" id="GO:0003714">
    <property type="term" value="F:transcription corepressor activity"/>
    <property type="evidence" value="ECO:0007669"/>
    <property type="project" value="InterPro"/>
</dbReference>
<dbReference type="GO" id="GO:0006397">
    <property type="term" value="P:mRNA processing"/>
    <property type="evidence" value="ECO:0007669"/>
    <property type="project" value="UniProtKB-KW"/>
</dbReference>
<dbReference type="GO" id="GO:0048025">
    <property type="term" value="P:negative regulation of mRNA splicing, via spliceosome"/>
    <property type="evidence" value="ECO:0000250"/>
    <property type="project" value="UniProtKB"/>
</dbReference>
<dbReference type="GO" id="GO:0043065">
    <property type="term" value="P:positive regulation of apoptotic process"/>
    <property type="evidence" value="ECO:0000250"/>
    <property type="project" value="UniProtKB"/>
</dbReference>
<dbReference type="GO" id="GO:0000381">
    <property type="term" value="P:regulation of alternative mRNA splicing, via spliceosome"/>
    <property type="evidence" value="ECO:0000250"/>
    <property type="project" value="UniProtKB"/>
</dbReference>
<dbReference type="GO" id="GO:0008380">
    <property type="term" value="P:RNA splicing"/>
    <property type="evidence" value="ECO:0007669"/>
    <property type="project" value="UniProtKB-KW"/>
</dbReference>
<dbReference type="FunFam" id="3.10.20.550:FF:000001">
    <property type="entry name" value="Histone deacetylase complex subunit SAP18"/>
    <property type="match status" value="1"/>
</dbReference>
<dbReference type="Gene3D" id="3.10.20.550">
    <property type="entry name" value="ASAP complex, SAP18 subunit"/>
    <property type="match status" value="1"/>
</dbReference>
<dbReference type="InterPro" id="IPR017250">
    <property type="entry name" value="Hist_deAcase_cplx_SAP18"/>
</dbReference>
<dbReference type="InterPro" id="IPR010516">
    <property type="entry name" value="SAP18"/>
</dbReference>
<dbReference type="InterPro" id="IPR042534">
    <property type="entry name" value="SAP18_sf"/>
</dbReference>
<dbReference type="PANTHER" id="PTHR13082:SF0">
    <property type="entry name" value="HISTONE DEACETYLASE COMPLEX SUBUNIT SAP18"/>
    <property type="match status" value="1"/>
</dbReference>
<dbReference type="PANTHER" id="PTHR13082">
    <property type="entry name" value="SAP18"/>
    <property type="match status" value="1"/>
</dbReference>
<dbReference type="Pfam" id="PF06487">
    <property type="entry name" value="SAP18"/>
    <property type="match status" value="1"/>
</dbReference>
<dbReference type="PIRSF" id="PIRSF037637">
    <property type="entry name" value="HDAC_SAP18"/>
    <property type="match status" value="1"/>
</dbReference>
<keyword id="KW-0007">Acetylation</keyword>
<keyword id="KW-0963">Cytoplasm</keyword>
<keyword id="KW-1017">Isopeptide bond</keyword>
<keyword id="KW-0507">mRNA processing</keyword>
<keyword id="KW-0508">mRNA splicing</keyword>
<keyword id="KW-0539">Nucleus</keyword>
<keyword id="KW-1185">Reference proteome</keyword>
<keyword id="KW-0678">Repressor</keyword>
<keyword id="KW-0804">Transcription</keyword>
<keyword id="KW-0805">Transcription regulation</keyword>
<keyword id="KW-0832">Ubl conjugation</keyword>
<accession>Q5RDT5</accession>
<gene>
    <name type="primary">SAP18</name>
</gene>
<protein>
    <recommendedName>
        <fullName>Histone deacetylase complex subunit SAP18</fullName>
    </recommendedName>
    <alternativeName>
        <fullName>18 kDa Sin3-associated polypeptide</fullName>
    </alternativeName>
    <alternativeName>
        <fullName>Sin3-associated polypeptide p18</fullName>
    </alternativeName>
</protein>
<name>SAP18_PONAB</name>
<reference key="1">
    <citation type="submission" date="2004-11" db="EMBL/GenBank/DDBJ databases">
        <authorList>
            <consortium name="The German cDNA consortium"/>
        </authorList>
    </citation>
    <scope>NUCLEOTIDE SEQUENCE [LARGE SCALE MRNA]</scope>
    <source>
        <tissue>Brain cortex</tissue>
    </source>
</reference>
<organism>
    <name type="scientific">Pongo abelii</name>
    <name type="common">Sumatran orangutan</name>
    <name type="synonym">Pongo pygmaeus abelii</name>
    <dbReference type="NCBI Taxonomy" id="9601"/>
    <lineage>
        <taxon>Eukaryota</taxon>
        <taxon>Metazoa</taxon>
        <taxon>Chordata</taxon>
        <taxon>Craniata</taxon>
        <taxon>Vertebrata</taxon>
        <taxon>Euteleostomi</taxon>
        <taxon>Mammalia</taxon>
        <taxon>Eutheria</taxon>
        <taxon>Euarchontoglires</taxon>
        <taxon>Primates</taxon>
        <taxon>Haplorrhini</taxon>
        <taxon>Catarrhini</taxon>
        <taxon>Hominidae</taxon>
        <taxon>Pongo</taxon>
    </lineage>
</organism>
<sequence length="153" mass="17561">MAVESRVTQEEIKKEPEKPIDREKTCPLLLRVFTTNNGRHHRMDEFSRGNVPSSELQIYTWMDATLKELTSLVKEVYPEARKKGTHFNFAIVFTDVKRPGYRVKEIGSTMSGRKGTDDSMTLQSQKFQIGDYLDIAITPPNRAPPPSGRMRPY</sequence>
<proteinExistence type="evidence at transcript level"/>
<evidence type="ECO:0000250" key="1"/>
<evidence type="ECO:0000250" key="2">
    <source>
        <dbReference type="UniProtKB" id="O00422"/>
    </source>
</evidence>
<evidence type="ECO:0000256" key="3">
    <source>
        <dbReference type="SAM" id="MobiDB-lite"/>
    </source>
</evidence>
<evidence type="ECO:0000305" key="4"/>